<keyword id="KW-0002">3D-structure</keyword>
<keyword id="KW-0007">Acetylation</keyword>
<keyword id="KW-0009">Actin-binding</keyword>
<keyword id="KW-0963">Cytoplasm</keyword>
<keyword id="KW-0206">Cytoskeleton</keyword>
<keyword id="KW-0903">Direct protein sequencing</keyword>
<keyword id="KW-1017">Isopeptide bond</keyword>
<keyword id="KW-0597">Phosphoprotein</keyword>
<keyword id="KW-1185">Reference proteome</keyword>
<keyword id="KW-0832">Ubl conjugation</keyword>
<sequence>MSDKPDMAEIEKFDKSKLKKTETQEKNPLPSKETIEQEKQAGES</sequence>
<name>TYB4_BOVIN</name>
<reference key="1">
    <citation type="submission" date="2005-01" db="EMBL/GenBank/DDBJ databases">
        <title>Analysis of sequences obtained from constructed full-length bovine cDNA libraries.</title>
        <authorList>
            <person name="Yu J."/>
            <person name="Meng Y."/>
            <person name="Wang Z."/>
            <person name="Hansen C."/>
            <person name="Li C."/>
            <person name="Moore S.S."/>
        </authorList>
    </citation>
    <scope>NUCLEOTIDE SEQUENCE [LARGE SCALE MRNA]</scope>
    <source>
        <tissue>Lymphoid epithelium</tissue>
    </source>
</reference>
<reference key="2">
    <citation type="submission" date="2007-02" db="EMBL/GenBank/DDBJ databases">
        <authorList>
            <consortium name="NIH - Mammalian Gene Collection (MGC) project"/>
        </authorList>
    </citation>
    <scope>NUCLEOTIDE SEQUENCE [LARGE SCALE MRNA]</scope>
    <source>
        <strain>Hereford</strain>
        <tissue>Fetal cerebellum</tissue>
    </source>
</reference>
<reference key="3">
    <citation type="journal article" date="1981" name="Proc. Natl. Acad. Sci. U.S.A.">
        <title>Complete amino acid sequence of bovine thymosin beta 4: a thymic hormone that induces terminal deoxynucleotidyl transferase activity in thymocyte populations.</title>
        <authorList>
            <person name="Low T.L.K."/>
            <person name="Hu S.-K."/>
            <person name="Goldstein A.L."/>
        </authorList>
    </citation>
    <scope>PROTEIN SEQUENCE OF 2-44</scope>
    <scope>ACETYLATION AT SER-2</scope>
</reference>
<reference key="4">
    <citation type="journal article" date="1989" name="Proc. Natl. Acad. Sci. U.S.A.">
        <title>Inhibitor of hematopoietic pluripotent stem cell proliferation: purification and determination of its structure.</title>
        <authorList>
            <person name="Lenfant M."/>
            <person name="Wdzieczak-Bakala J."/>
            <person name="Guittet E."/>
            <person name="Prome J.-C."/>
            <person name="Sotty D."/>
            <person name="Frindel E."/>
        </authorList>
    </citation>
    <scope>FUNCTION (HEMATOPOIETIC SYSTEM REGULATORY PEPTIDE)</scope>
</reference>
<reference key="5">
    <citation type="journal article" date="1990" name="FEBS Lett.">
        <title>Involvement of thymosin beta 4 and endoproteinase Asp-N in the biosynthesis of the tetrapeptide AcSerAspLysPro a regulator of the hematopoietic system.</title>
        <authorList>
            <person name="Grillon C."/>
            <person name="Rieger K."/>
            <person name="Bakala J."/>
            <person name="Schott D."/>
            <person name="Morgat J.L."/>
            <person name="Hannappel E."/>
            <person name="Voelter W."/>
            <person name="Lenfant M."/>
        </authorList>
    </citation>
    <scope>FORMATION OF HEMOREGULATORY PEPTIDE ACSDKP</scope>
</reference>
<reference key="6">
    <citation type="journal article" date="1992" name="J. Biol. Chem.">
        <title>Equine leukocyte elastase inhibitor. Primary structure and identification as a thymosin-binding protein.</title>
        <authorList>
            <person name="Dubin A."/>
            <person name="Travis J."/>
            <person name="Enghild J.J."/>
            <person name="Potempa J."/>
        </authorList>
    </citation>
    <scope>INTERACTION WITH SERPINB1</scope>
</reference>
<reference key="7">
    <citation type="journal article" date="1990" name="Biochemistry">
        <title>Solution conformation of thymosin beta 4: a nuclear magnetic resonance and simulated annealing study.</title>
        <authorList>
            <person name="Zarbock J."/>
            <person name="Oschkinat H."/>
            <person name="Hannappel E."/>
            <person name="Kalbacher H."/>
            <person name="Voelter W."/>
            <person name="Holak T.A."/>
        </authorList>
    </citation>
    <scope>STRUCTURE BY NMR</scope>
</reference>
<reference key="8">
    <citation type="journal article" date="1993" name="Eur. J. Biochem.">
        <title>Conformation of thymosin beta 4 in water determined by NMR spectroscopy.</title>
        <authorList>
            <person name="Czisch M."/>
            <person name="Schleicher M."/>
            <person name="Hoerger S."/>
            <person name="Voelter W."/>
            <person name="Holak T.A."/>
        </authorList>
    </citation>
    <scope>STRUCTURE BY NMR</scope>
</reference>
<accession>P62326</accession>
<accession>A2VDY8</accession>
<accession>P01253</accession>
<accession>P01254</accession>
<accession>Q56JV5</accession>
<accession>Q63576</accession>
<evidence type="ECO:0000250" key="1">
    <source>
        <dbReference type="UniProtKB" id="P62328"/>
    </source>
</evidence>
<evidence type="ECO:0000256" key="2">
    <source>
        <dbReference type="SAM" id="MobiDB-lite"/>
    </source>
</evidence>
<evidence type="ECO:0000269" key="3">
    <source>
    </source>
</evidence>
<evidence type="ECO:0000269" key="4">
    <source>
    </source>
</evidence>
<evidence type="ECO:0000269" key="5">
    <source>
    </source>
</evidence>
<evidence type="ECO:0000303" key="6">
    <source>
    </source>
</evidence>
<evidence type="ECO:0000305" key="7"/>
<evidence type="ECO:0000305" key="8">
    <source>
    </source>
</evidence>
<evidence type="ECO:0007829" key="9">
    <source>
        <dbReference type="PDB" id="3U9D"/>
    </source>
</evidence>
<gene>
    <name type="primary">TMSB4</name>
    <name type="synonym">THYB4</name>
</gene>
<feature type="initiator methionine" description="Removed" evidence="5">
    <location>
        <position position="1"/>
    </location>
</feature>
<feature type="chain" id="PRO_0000045917" description="Thymosin beta-4" evidence="5">
    <location>
        <begin position="2"/>
        <end position="44"/>
    </location>
</feature>
<feature type="peptide" id="PRO_0000034292" description="Hemoregulatory peptide AcSDKP" evidence="8">
    <location>
        <begin position="2"/>
        <end position="5"/>
    </location>
</feature>
<feature type="region of interest" description="Disordered" evidence="2">
    <location>
        <begin position="1"/>
        <end position="44"/>
    </location>
</feature>
<feature type="compositionally biased region" description="Basic and acidic residues" evidence="2">
    <location>
        <begin position="1"/>
        <end position="25"/>
    </location>
</feature>
<feature type="compositionally biased region" description="Basic and acidic residues" evidence="2">
    <location>
        <begin position="33"/>
        <end position="44"/>
    </location>
</feature>
<feature type="modified residue" description="N-acetylserine" evidence="5">
    <location>
        <position position="2"/>
    </location>
</feature>
<feature type="modified residue" description="Phosphoserine" evidence="1">
    <location>
        <position position="2"/>
    </location>
</feature>
<feature type="modified residue" description="N6-acetyllysine" evidence="1">
    <location>
        <position position="4"/>
    </location>
</feature>
<feature type="modified residue" description="N6-acetyllysine; alternate" evidence="1">
    <location>
        <position position="12"/>
    </location>
</feature>
<feature type="modified residue" description="Phosphothreonine" evidence="1">
    <location>
        <position position="23"/>
    </location>
</feature>
<feature type="modified residue" description="N6-acetyllysine" evidence="1">
    <location>
        <position position="26"/>
    </location>
</feature>
<feature type="modified residue" description="Phosphoserine" evidence="1">
    <location>
        <position position="31"/>
    </location>
</feature>
<feature type="modified residue" description="N6-acetyllysine" evidence="1">
    <location>
        <position position="32"/>
    </location>
</feature>
<feature type="modified residue" description="Phosphothreonine" evidence="1">
    <location>
        <position position="34"/>
    </location>
</feature>
<feature type="modified residue" description="N6-acetyllysine" evidence="1">
    <location>
        <position position="39"/>
    </location>
</feature>
<feature type="cross-link" description="Glycyl lysine isopeptide (Lys-Gly) (interchain with G-Cter in SUMO2); alternate" evidence="1">
    <location>
        <position position="12"/>
    </location>
</feature>
<feature type="helix" evidence="9">
    <location>
        <begin position="15"/>
        <end position="17"/>
    </location>
</feature>
<protein>
    <recommendedName>
        <fullName>Thymosin beta-4</fullName>
        <shortName>T beta-4</shortName>
    </recommendedName>
    <component>
        <recommendedName>
            <fullName evidence="7">Hemoregulatory peptide AcSDKP</fullName>
        </recommendedName>
        <alternativeName>
            <fullName evidence="6">Ac-Ser-Asp-Lys-Pro</fullName>
        </alternativeName>
        <alternativeName>
            <fullName evidence="7">N-acetyl-SDKP</fullName>
            <shortName evidence="7">AcSDKP</shortName>
        </alternativeName>
        <alternativeName>
            <fullName evidence="1">Seraspenide</fullName>
        </alternativeName>
    </component>
</protein>
<proteinExistence type="evidence at protein level"/>
<organism>
    <name type="scientific">Bos taurus</name>
    <name type="common">Bovine</name>
    <dbReference type="NCBI Taxonomy" id="9913"/>
    <lineage>
        <taxon>Eukaryota</taxon>
        <taxon>Metazoa</taxon>
        <taxon>Chordata</taxon>
        <taxon>Craniata</taxon>
        <taxon>Vertebrata</taxon>
        <taxon>Euteleostomi</taxon>
        <taxon>Mammalia</taxon>
        <taxon>Eutheria</taxon>
        <taxon>Laurasiatheria</taxon>
        <taxon>Artiodactyla</taxon>
        <taxon>Ruminantia</taxon>
        <taxon>Pecora</taxon>
        <taxon>Bovidae</taxon>
        <taxon>Bovinae</taxon>
        <taxon>Bos</taxon>
    </lineage>
</organism>
<comment type="function">
    <text evidence="1">Plays an important role in the organization of the cytoskeleton. Binds to and sequesters actin monomers (G actin) and therefore inhibits actin polymerization.</text>
</comment>
<comment type="function">
    <molecule>Hemoregulatory peptide AcSDKP</molecule>
    <text evidence="4">Potent inhibitor of bone marrow derived stem cell differentiation (PubMed:2915977). Acts by inhibits the entry of hematopoietic pluripotent stem cells into the S-phase (PubMed:2915977).</text>
</comment>
<comment type="subunit">
    <text evidence="1 3">Identified in a complex composed of ACTA1, COBL, GSN AND TMSB4X (By similarity). Interacts with SERPINB1 (PubMed:1551869).</text>
</comment>
<comment type="subcellular location">
    <subcellularLocation>
        <location evidence="1">Cytoplasm</location>
        <location evidence="1">Cytoskeleton</location>
    </subcellularLocation>
</comment>
<comment type="PTM">
    <molecule>Hemoregulatory peptide AcSDKP</molecule>
    <text evidence="1">AcSDKP is inactivated by ACE, which removes the dipeptide Lys-Pro from its C-terminus.</text>
</comment>
<comment type="similarity">
    <text evidence="7">Belongs to the thymosin beta family.</text>
</comment>
<dbReference type="EMBL" id="AY911377">
    <property type="protein sequence ID" value="AAW82140.1"/>
    <property type="molecule type" value="mRNA"/>
</dbReference>
<dbReference type="EMBL" id="BC133478">
    <property type="protein sequence ID" value="AAI33479.1"/>
    <property type="molecule type" value="mRNA"/>
</dbReference>
<dbReference type="PIR" id="A01521">
    <property type="entry name" value="TNBOB4"/>
</dbReference>
<dbReference type="RefSeq" id="NP_001002885.1">
    <property type="nucleotide sequence ID" value="NM_001002885.1"/>
</dbReference>
<dbReference type="RefSeq" id="NP_001106702.1">
    <property type="nucleotide sequence ID" value="NM_001113231.1"/>
</dbReference>
<dbReference type="PDB" id="3SJH">
    <property type="method" value="X-ray"/>
    <property type="resolution" value="1.75 A"/>
    <property type="chains" value="B=18-44"/>
</dbReference>
<dbReference type="PDB" id="3U8X">
    <property type="method" value="X-ray"/>
    <property type="resolution" value="2.00 A"/>
    <property type="chains" value="B/D=18-44"/>
</dbReference>
<dbReference type="PDB" id="3U9D">
    <property type="method" value="X-ray"/>
    <property type="resolution" value="2.50 A"/>
    <property type="chains" value="B/D=13-44"/>
</dbReference>
<dbReference type="PDBsum" id="3SJH"/>
<dbReference type="PDBsum" id="3U8X"/>
<dbReference type="PDBsum" id="3U9D"/>
<dbReference type="BMRB" id="P62326"/>
<dbReference type="SMR" id="P62326"/>
<dbReference type="FunCoup" id="P62326">
    <property type="interactions" value="233"/>
</dbReference>
<dbReference type="STRING" id="9913.ENSBTAP00000024387"/>
<dbReference type="iPTMnet" id="P62326"/>
<dbReference type="PaxDb" id="9913-ENSBTAP00000024387"/>
<dbReference type="PeptideAtlas" id="P62326"/>
<dbReference type="Ensembl" id="ENSBTAT00000024387.6">
    <property type="protein sequence ID" value="ENSBTAP00000024387.6"/>
    <property type="gene ID" value="ENSBTAG00000038488.4"/>
</dbReference>
<dbReference type="GeneID" id="101906565"/>
<dbReference type="KEGG" id="bta:282386"/>
<dbReference type="CTD" id="101906565"/>
<dbReference type="CTD" id="7114"/>
<dbReference type="eggNOG" id="KOG4794">
    <property type="taxonomic scope" value="Eukaryota"/>
</dbReference>
<dbReference type="GeneTree" id="ENSGT00940000154433"/>
<dbReference type="HOGENOM" id="CLU_208046_0_0_1"/>
<dbReference type="InParanoid" id="P62326"/>
<dbReference type="EvolutionaryTrace" id="P62326"/>
<dbReference type="Proteomes" id="UP000009136">
    <property type="component" value="Chromosome X"/>
</dbReference>
<dbReference type="GO" id="GO:0005737">
    <property type="term" value="C:cytoplasm"/>
    <property type="evidence" value="ECO:0000318"/>
    <property type="project" value="GO_Central"/>
</dbReference>
<dbReference type="GO" id="GO:0005856">
    <property type="term" value="C:cytoskeleton"/>
    <property type="evidence" value="ECO:0007669"/>
    <property type="project" value="UniProtKB-SubCell"/>
</dbReference>
<dbReference type="GO" id="GO:0005829">
    <property type="term" value="C:cytosol"/>
    <property type="evidence" value="ECO:0000250"/>
    <property type="project" value="CAFA"/>
</dbReference>
<dbReference type="GO" id="GO:0005615">
    <property type="term" value="C:extracellular space"/>
    <property type="evidence" value="ECO:0000314"/>
    <property type="project" value="CAFA"/>
</dbReference>
<dbReference type="GO" id="GO:0003785">
    <property type="term" value="F:actin monomer binding"/>
    <property type="evidence" value="ECO:0000314"/>
    <property type="project" value="CAFA"/>
</dbReference>
<dbReference type="GO" id="GO:0140311">
    <property type="term" value="F:protein sequestering activity"/>
    <property type="evidence" value="ECO:0000269"/>
    <property type="project" value="DisProt"/>
</dbReference>
<dbReference type="GO" id="GO:0007015">
    <property type="term" value="P:actin filament organization"/>
    <property type="evidence" value="ECO:0007669"/>
    <property type="project" value="InterPro"/>
</dbReference>
<dbReference type="GO" id="GO:0071385">
    <property type="term" value="P:cellular response to glucocorticoid stimulus"/>
    <property type="evidence" value="ECO:0000314"/>
    <property type="project" value="CAFA"/>
</dbReference>
<dbReference type="GO" id="GO:0030837">
    <property type="term" value="P:negative regulation of actin filament polymerization"/>
    <property type="evidence" value="ECO:0000314"/>
    <property type="project" value="UniProtKB"/>
</dbReference>
<dbReference type="GO" id="GO:0050728">
    <property type="term" value="P:negative regulation of inflammatory response"/>
    <property type="evidence" value="ECO:0000315"/>
    <property type="project" value="CAFA"/>
</dbReference>
<dbReference type="GO" id="GO:0090024">
    <property type="term" value="P:negative regulation of neutrophil chemotaxis"/>
    <property type="evidence" value="ECO:0000315"/>
    <property type="project" value="CAFA"/>
</dbReference>
<dbReference type="GO" id="GO:1902624">
    <property type="term" value="P:positive regulation of neutrophil migration"/>
    <property type="evidence" value="ECO:0000315"/>
    <property type="project" value="CAFA"/>
</dbReference>
<dbReference type="GO" id="GO:0090303">
    <property type="term" value="P:positive regulation of wound healing"/>
    <property type="evidence" value="ECO:0000315"/>
    <property type="project" value="CAFA"/>
</dbReference>
<dbReference type="GO" id="GO:0030334">
    <property type="term" value="P:regulation of cell migration"/>
    <property type="evidence" value="ECO:0000318"/>
    <property type="project" value="GO_Central"/>
</dbReference>
<dbReference type="CDD" id="cd22059">
    <property type="entry name" value="WH2_BetaT"/>
    <property type="match status" value="1"/>
</dbReference>
<dbReference type="DisProt" id="DP00795"/>
<dbReference type="FunFam" id="1.20.5.520:FF:000001">
    <property type="entry name" value="Thymosin beta"/>
    <property type="match status" value="1"/>
</dbReference>
<dbReference type="Gene3D" id="1.20.5.520">
    <property type="entry name" value="Single helix bin"/>
    <property type="match status" value="1"/>
</dbReference>
<dbReference type="InterPro" id="IPR001152">
    <property type="entry name" value="Beta-thymosin"/>
</dbReference>
<dbReference type="InterPro" id="IPR038386">
    <property type="entry name" value="Beta-thymosin_sf"/>
</dbReference>
<dbReference type="PANTHER" id="PTHR12021">
    <property type="entry name" value="THYMOSIN BETA"/>
    <property type="match status" value="1"/>
</dbReference>
<dbReference type="PANTHER" id="PTHR12021:SF20">
    <property type="entry name" value="THYMOSIN BETA-4"/>
    <property type="match status" value="1"/>
</dbReference>
<dbReference type="Pfam" id="PF01290">
    <property type="entry name" value="Thymosin"/>
    <property type="match status" value="1"/>
</dbReference>
<dbReference type="PIRSF" id="PIRSF001828">
    <property type="entry name" value="Thymosin_beta"/>
    <property type="match status" value="1"/>
</dbReference>
<dbReference type="SMART" id="SM00152">
    <property type="entry name" value="THY"/>
    <property type="match status" value="1"/>
</dbReference>
<dbReference type="PROSITE" id="PS00500">
    <property type="entry name" value="THYMOSIN_B4"/>
    <property type="match status" value="1"/>
</dbReference>